<proteinExistence type="inferred from homology"/>
<sequence length="96" mass="11236">MDILKEEFEIIKQRIKDKPEGSYVAYLTTADKKTPINKICEKVGEEATETILAAKDQDKQELIYESADLIFHILVLLANNGIEYEELMEEFERRRK</sequence>
<accession>A6UTD9</accession>
<comment type="catalytic activity">
    <reaction evidence="1">
        <text>1-(5-phospho-beta-D-ribosyl)-ATP + H2O = 1-(5-phospho-beta-D-ribosyl)-5'-AMP + diphosphate + H(+)</text>
        <dbReference type="Rhea" id="RHEA:22828"/>
        <dbReference type="ChEBI" id="CHEBI:15377"/>
        <dbReference type="ChEBI" id="CHEBI:15378"/>
        <dbReference type="ChEBI" id="CHEBI:33019"/>
        <dbReference type="ChEBI" id="CHEBI:59457"/>
        <dbReference type="ChEBI" id="CHEBI:73183"/>
        <dbReference type="EC" id="3.6.1.31"/>
    </reaction>
</comment>
<comment type="pathway">
    <text evidence="1">Amino-acid biosynthesis; L-histidine biosynthesis; L-histidine from 5-phospho-alpha-D-ribose 1-diphosphate: step 2/9.</text>
</comment>
<comment type="subcellular location">
    <subcellularLocation>
        <location evidence="1">Cytoplasm</location>
    </subcellularLocation>
</comment>
<comment type="similarity">
    <text evidence="1">Belongs to the PRA-PH family.</text>
</comment>
<feature type="chain" id="PRO_1000063347" description="Phosphoribosyl-ATP pyrophosphatase">
    <location>
        <begin position="1"/>
        <end position="96"/>
    </location>
</feature>
<protein>
    <recommendedName>
        <fullName evidence="1">Phosphoribosyl-ATP pyrophosphatase</fullName>
        <shortName evidence="1">PRA-PH</shortName>
        <ecNumber evidence="1">3.6.1.31</ecNumber>
    </recommendedName>
</protein>
<name>HIS2_META3</name>
<organism>
    <name type="scientific">Methanococcus aeolicus (strain ATCC BAA-1280 / DSM 17508 / OCM 812 / Nankai-3)</name>
    <dbReference type="NCBI Taxonomy" id="419665"/>
    <lineage>
        <taxon>Archaea</taxon>
        <taxon>Methanobacteriati</taxon>
        <taxon>Methanobacteriota</taxon>
        <taxon>Methanomada group</taxon>
        <taxon>Methanococci</taxon>
        <taxon>Methanococcales</taxon>
        <taxon>Methanococcaceae</taxon>
        <taxon>Methanococcus</taxon>
    </lineage>
</organism>
<evidence type="ECO:0000255" key="1">
    <source>
        <dbReference type="HAMAP-Rule" id="MF_01020"/>
    </source>
</evidence>
<dbReference type="EC" id="3.6.1.31" evidence="1"/>
<dbReference type="EMBL" id="CP000743">
    <property type="protein sequence ID" value="ABR55761.1"/>
    <property type="molecule type" value="Genomic_DNA"/>
</dbReference>
<dbReference type="RefSeq" id="WP_011972893.1">
    <property type="nucleotide sequence ID" value="NC_009635.1"/>
</dbReference>
<dbReference type="SMR" id="A6UTD9"/>
<dbReference type="STRING" id="419665.Maeo_0169"/>
<dbReference type="GeneID" id="5327496"/>
<dbReference type="GeneID" id="75305601"/>
<dbReference type="KEGG" id="mae:Maeo_0169"/>
<dbReference type="eggNOG" id="arCOG02677">
    <property type="taxonomic scope" value="Archaea"/>
</dbReference>
<dbReference type="HOGENOM" id="CLU_123337_0_0_2"/>
<dbReference type="OrthoDB" id="39686at2157"/>
<dbReference type="UniPathway" id="UPA00031">
    <property type="reaction ID" value="UER00007"/>
</dbReference>
<dbReference type="Proteomes" id="UP000001106">
    <property type="component" value="Chromosome"/>
</dbReference>
<dbReference type="GO" id="GO:0005737">
    <property type="term" value="C:cytoplasm"/>
    <property type="evidence" value="ECO:0007669"/>
    <property type="project" value="UniProtKB-SubCell"/>
</dbReference>
<dbReference type="GO" id="GO:0005524">
    <property type="term" value="F:ATP binding"/>
    <property type="evidence" value="ECO:0007669"/>
    <property type="project" value="UniProtKB-KW"/>
</dbReference>
<dbReference type="GO" id="GO:0004636">
    <property type="term" value="F:phosphoribosyl-ATP diphosphatase activity"/>
    <property type="evidence" value="ECO:0007669"/>
    <property type="project" value="UniProtKB-UniRule"/>
</dbReference>
<dbReference type="GO" id="GO:0000105">
    <property type="term" value="P:L-histidine biosynthetic process"/>
    <property type="evidence" value="ECO:0007669"/>
    <property type="project" value="UniProtKB-UniRule"/>
</dbReference>
<dbReference type="CDD" id="cd11534">
    <property type="entry name" value="NTP-PPase_HisIE_like"/>
    <property type="match status" value="1"/>
</dbReference>
<dbReference type="Gene3D" id="1.10.287.1080">
    <property type="entry name" value="MazG-like"/>
    <property type="match status" value="1"/>
</dbReference>
<dbReference type="HAMAP" id="MF_01020">
    <property type="entry name" value="HisE"/>
    <property type="match status" value="1"/>
</dbReference>
<dbReference type="InterPro" id="IPR008179">
    <property type="entry name" value="HisE"/>
</dbReference>
<dbReference type="InterPro" id="IPR021130">
    <property type="entry name" value="PRib-ATP_PPHydrolase-like"/>
</dbReference>
<dbReference type="NCBIfam" id="TIGR03188">
    <property type="entry name" value="histidine_hisI"/>
    <property type="match status" value="1"/>
</dbReference>
<dbReference type="PANTHER" id="PTHR42945">
    <property type="entry name" value="HISTIDINE BIOSYNTHESIS BIFUNCTIONAL PROTEIN"/>
    <property type="match status" value="1"/>
</dbReference>
<dbReference type="PANTHER" id="PTHR42945:SF9">
    <property type="entry name" value="HISTIDINE BIOSYNTHESIS BIFUNCTIONAL PROTEIN HISIE"/>
    <property type="match status" value="1"/>
</dbReference>
<dbReference type="Pfam" id="PF01503">
    <property type="entry name" value="PRA-PH"/>
    <property type="match status" value="1"/>
</dbReference>
<dbReference type="SUPFAM" id="SSF101386">
    <property type="entry name" value="all-alpha NTP pyrophosphatases"/>
    <property type="match status" value="1"/>
</dbReference>
<keyword id="KW-0028">Amino-acid biosynthesis</keyword>
<keyword id="KW-0067">ATP-binding</keyword>
<keyword id="KW-0963">Cytoplasm</keyword>
<keyword id="KW-0368">Histidine biosynthesis</keyword>
<keyword id="KW-0378">Hydrolase</keyword>
<keyword id="KW-0547">Nucleotide-binding</keyword>
<reference key="1">
    <citation type="submission" date="2007-06" db="EMBL/GenBank/DDBJ databases">
        <title>Complete sequence of Methanococcus aeolicus Nankai-3.</title>
        <authorList>
            <consortium name="US DOE Joint Genome Institute"/>
            <person name="Copeland A."/>
            <person name="Lucas S."/>
            <person name="Lapidus A."/>
            <person name="Barry K."/>
            <person name="Glavina del Rio T."/>
            <person name="Dalin E."/>
            <person name="Tice H."/>
            <person name="Pitluck S."/>
            <person name="Chain P."/>
            <person name="Malfatti S."/>
            <person name="Shin M."/>
            <person name="Vergez L."/>
            <person name="Schmutz J."/>
            <person name="Larimer F."/>
            <person name="Land M."/>
            <person name="Hauser L."/>
            <person name="Kyrpides N."/>
            <person name="Lykidis A."/>
            <person name="Sieprawska-Lupa M."/>
            <person name="Whitman W.B."/>
            <person name="Richardson P."/>
        </authorList>
    </citation>
    <scope>NUCLEOTIDE SEQUENCE [LARGE SCALE GENOMIC DNA]</scope>
    <source>
        <strain>ATCC BAA-1280 / DSM 17508 / OCM 812 / Nankai-3</strain>
    </source>
</reference>
<gene>
    <name evidence="1" type="primary">hisE</name>
    <name type="ordered locus">Maeo_0169</name>
</gene>